<keyword id="KW-0963">Cytoplasm</keyword>
<keyword id="KW-0489">Methyltransferase</keyword>
<keyword id="KW-0949">S-adenosyl-L-methionine</keyword>
<keyword id="KW-0808">Transferase</keyword>
<keyword id="KW-0819">tRNA processing</keyword>
<name>TRMD_SHEPW</name>
<reference key="1">
    <citation type="journal article" date="2008" name="PLoS ONE">
        <title>Environmental adaptation: genomic analysis of the piezotolerant and psychrotolerant deep-sea iron reducing bacterium Shewanella piezotolerans WP3.</title>
        <authorList>
            <person name="Wang F."/>
            <person name="Wang J."/>
            <person name="Jian H."/>
            <person name="Zhang B."/>
            <person name="Li S."/>
            <person name="Wang F."/>
            <person name="Zeng X."/>
            <person name="Gao L."/>
            <person name="Bartlett D.H."/>
            <person name="Yu J."/>
            <person name="Hu S."/>
            <person name="Xiao X."/>
        </authorList>
    </citation>
    <scope>NUCLEOTIDE SEQUENCE [LARGE SCALE GENOMIC DNA]</scope>
    <source>
        <strain>WP3 / JCM 13877</strain>
    </source>
</reference>
<dbReference type="EC" id="2.1.1.228" evidence="1"/>
<dbReference type="EMBL" id="CP000472">
    <property type="protein sequence ID" value="ACJ30448.1"/>
    <property type="molecule type" value="Genomic_DNA"/>
</dbReference>
<dbReference type="RefSeq" id="WP_020913792.1">
    <property type="nucleotide sequence ID" value="NC_011566.1"/>
</dbReference>
<dbReference type="SMR" id="B8CQI2"/>
<dbReference type="STRING" id="225849.swp_3766"/>
<dbReference type="KEGG" id="swp:swp_3766"/>
<dbReference type="eggNOG" id="COG0336">
    <property type="taxonomic scope" value="Bacteria"/>
</dbReference>
<dbReference type="HOGENOM" id="CLU_047363_0_1_6"/>
<dbReference type="OrthoDB" id="9807416at2"/>
<dbReference type="Proteomes" id="UP000000753">
    <property type="component" value="Chromosome"/>
</dbReference>
<dbReference type="GO" id="GO:0005829">
    <property type="term" value="C:cytosol"/>
    <property type="evidence" value="ECO:0007669"/>
    <property type="project" value="TreeGrafter"/>
</dbReference>
<dbReference type="GO" id="GO:0052906">
    <property type="term" value="F:tRNA (guanine(37)-N1)-methyltransferase activity"/>
    <property type="evidence" value="ECO:0007669"/>
    <property type="project" value="UniProtKB-UniRule"/>
</dbReference>
<dbReference type="GO" id="GO:0002939">
    <property type="term" value="P:tRNA N1-guanine methylation"/>
    <property type="evidence" value="ECO:0007669"/>
    <property type="project" value="TreeGrafter"/>
</dbReference>
<dbReference type="CDD" id="cd18080">
    <property type="entry name" value="TrmD-like"/>
    <property type="match status" value="1"/>
</dbReference>
<dbReference type="FunFam" id="1.10.1270.20:FF:000001">
    <property type="entry name" value="tRNA (guanine-N(1)-)-methyltransferase"/>
    <property type="match status" value="1"/>
</dbReference>
<dbReference type="FunFam" id="3.40.1280.10:FF:000001">
    <property type="entry name" value="tRNA (guanine-N(1)-)-methyltransferase"/>
    <property type="match status" value="1"/>
</dbReference>
<dbReference type="Gene3D" id="3.40.1280.10">
    <property type="match status" value="1"/>
</dbReference>
<dbReference type="Gene3D" id="1.10.1270.20">
    <property type="entry name" value="tRNA(m1g37)methyltransferase, domain 2"/>
    <property type="match status" value="1"/>
</dbReference>
<dbReference type="HAMAP" id="MF_00605">
    <property type="entry name" value="TrmD"/>
    <property type="match status" value="1"/>
</dbReference>
<dbReference type="InterPro" id="IPR029028">
    <property type="entry name" value="Alpha/beta_knot_MTases"/>
</dbReference>
<dbReference type="InterPro" id="IPR023148">
    <property type="entry name" value="tRNA_m1G_MeTrfase_C_sf"/>
</dbReference>
<dbReference type="InterPro" id="IPR002649">
    <property type="entry name" value="tRNA_m1G_MeTrfase_TrmD"/>
</dbReference>
<dbReference type="InterPro" id="IPR029026">
    <property type="entry name" value="tRNA_m1G_MTases_N"/>
</dbReference>
<dbReference type="InterPro" id="IPR016009">
    <property type="entry name" value="tRNA_MeTrfase_TRMD/TRM10"/>
</dbReference>
<dbReference type="NCBIfam" id="NF000648">
    <property type="entry name" value="PRK00026.1"/>
    <property type="match status" value="1"/>
</dbReference>
<dbReference type="NCBIfam" id="TIGR00088">
    <property type="entry name" value="trmD"/>
    <property type="match status" value="1"/>
</dbReference>
<dbReference type="PANTHER" id="PTHR46417">
    <property type="entry name" value="TRNA (GUANINE-N(1)-)-METHYLTRANSFERASE"/>
    <property type="match status" value="1"/>
</dbReference>
<dbReference type="PANTHER" id="PTHR46417:SF1">
    <property type="entry name" value="TRNA (GUANINE-N(1)-)-METHYLTRANSFERASE"/>
    <property type="match status" value="1"/>
</dbReference>
<dbReference type="Pfam" id="PF01746">
    <property type="entry name" value="tRNA_m1G_MT"/>
    <property type="match status" value="1"/>
</dbReference>
<dbReference type="PIRSF" id="PIRSF000386">
    <property type="entry name" value="tRNA_mtase"/>
    <property type="match status" value="1"/>
</dbReference>
<dbReference type="SUPFAM" id="SSF75217">
    <property type="entry name" value="alpha/beta knot"/>
    <property type="match status" value="1"/>
</dbReference>
<feature type="chain" id="PRO_1000130208" description="tRNA (guanine-N(1)-)-methyltransferase">
    <location>
        <begin position="1"/>
        <end position="248"/>
    </location>
</feature>
<feature type="binding site" evidence="1">
    <location>
        <position position="113"/>
    </location>
    <ligand>
        <name>S-adenosyl-L-methionine</name>
        <dbReference type="ChEBI" id="CHEBI:59789"/>
    </ligand>
</feature>
<feature type="binding site" evidence="1">
    <location>
        <begin position="133"/>
        <end position="138"/>
    </location>
    <ligand>
        <name>S-adenosyl-L-methionine</name>
        <dbReference type="ChEBI" id="CHEBI:59789"/>
    </ligand>
</feature>
<organism>
    <name type="scientific">Shewanella piezotolerans (strain WP3 / JCM 13877)</name>
    <dbReference type="NCBI Taxonomy" id="225849"/>
    <lineage>
        <taxon>Bacteria</taxon>
        <taxon>Pseudomonadati</taxon>
        <taxon>Pseudomonadota</taxon>
        <taxon>Gammaproteobacteria</taxon>
        <taxon>Alteromonadales</taxon>
        <taxon>Shewanellaceae</taxon>
        <taxon>Shewanella</taxon>
    </lineage>
</organism>
<evidence type="ECO:0000255" key="1">
    <source>
        <dbReference type="HAMAP-Rule" id="MF_00605"/>
    </source>
</evidence>
<gene>
    <name evidence="1" type="primary">trmD</name>
    <name type="ordered locus">swp_3766</name>
</gene>
<sequence length="248" mass="27427">MWLGVVTLFPEMFRAVTDFGVTGRAVSKGLLEMQTWNPRDFTHDKHKTVDDRPYGGGPGMLMMVQPLRDAIHAAKAAAGKEAKVIYLSPQGRKLTQQGVEELAKSSSLVLVCGRYEGVDERIIQTEVDEEWSIGDYVLSGGELPAMTLIDSVSRLVPGVLGKKASAEQDSFSDGLLDCPHYTRPESMDGLDVPAVLLSGNHEHIRRWRLQQSLGRTLLRRPELLENLALTGEQEQLLAEFVDSIKQDA</sequence>
<protein>
    <recommendedName>
        <fullName evidence="1">tRNA (guanine-N(1)-)-methyltransferase</fullName>
        <ecNumber evidence="1">2.1.1.228</ecNumber>
    </recommendedName>
    <alternativeName>
        <fullName evidence="1">M1G-methyltransferase</fullName>
    </alternativeName>
    <alternativeName>
        <fullName evidence="1">tRNA [GM37] methyltransferase</fullName>
    </alternativeName>
</protein>
<accession>B8CQI2</accession>
<comment type="function">
    <text evidence="1">Specifically methylates guanosine-37 in various tRNAs.</text>
</comment>
<comment type="catalytic activity">
    <reaction evidence="1">
        <text>guanosine(37) in tRNA + S-adenosyl-L-methionine = N(1)-methylguanosine(37) in tRNA + S-adenosyl-L-homocysteine + H(+)</text>
        <dbReference type="Rhea" id="RHEA:36899"/>
        <dbReference type="Rhea" id="RHEA-COMP:10145"/>
        <dbReference type="Rhea" id="RHEA-COMP:10147"/>
        <dbReference type="ChEBI" id="CHEBI:15378"/>
        <dbReference type="ChEBI" id="CHEBI:57856"/>
        <dbReference type="ChEBI" id="CHEBI:59789"/>
        <dbReference type="ChEBI" id="CHEBI:73542"/>
        <dbReference type="ChEBI" id="CHEBI:74269"/>
        <dbReference type="EC" id="2.1.1.228"/>
    </reaction>
</comment>
<comment type="subunit">
    <text evidence="1">Homodimer.</text>
</comment>
<comment type="subcellular location">
    <subcellularLocation>
        <location evidence="1">Cytoplasm</location>
    </subcellularLocation>
</comment>
<comment type="similarity">
    <text evidence="1">Belongs to the RNA methyltransferase TrmD family.</text>
</comment>
<proteinExistence type="inferred from homology"/>